<sequence length="37" mass="4458">MKVNPSVKPMCDKCRVIRRHRRVMVICVDPRHKQRQG</sequence>
<protein>
    <recommendedName>
        <fullName evidence="1">Large ribosomal subunit protein bL36</fullName>
    </recommendedName>
    <alternativeName>
        <fullName evidence="2">50S ribosomal protein L36</fullName>
    </alternativeName>
</protein>
<proteinExistence type="inferred from homology"/>
<gene>
    <name evidence="1" type="primary">rpmJ</name>
    <name type="ordered locus">MLBr01961</name>
</gene>
<name>RL36_MYCLB</name>
<keyword id="KW-0687">Ribonucleoprotein</keyword>
<keyword id="KW-0689">Ribosomal protein</keyword>
<organism>
    <name type="scientific">Mycobacterium leprae (strain Br4923)</name>
    <dbReference type="NCBI Taxonomy" id="561304"/>
    <lineage>
        <taxon>Bacteria</taxon>
        <taxon>Bacillati</taxon>
        <taxon>Actinomycetota</taxon>
        <taxon>Actinomycetes</taxon>
        <taxon>Mycobacteriales</taxon>
        <taxon>Mycobacteriaceae</taxon>
        <taxon>Mycobacterium</taxon>
    </lineage>
</organism>
<accession>B8ZSI0</accession>
<dbReference type="EMBL" id="FM211192">
    <property type="protein sequence ID" value="CAR72058.1"/>
    <property type="molecule type" value="Genomic_DNA"/>
</dbReference>
<dbReference type="SMR" id="B8ZSI0"/>
<dbReference type="KEGG" id="mlb:MLBr01961"/>
<dbReference type="HOGENOM" id="CLU_135723_6_2_11"/>
<dbReference type="Proteomes" id="UP000006900">
    <property type="component" value="Chromosome"/>
</dbReference>
<dbReference type="GO" id="GO:0005737">
    <property type="term" value="C:cytoplasm"/>
    <property type="evidence" value="ECO:0007669"/>
    <property type="project" value="UniProtKB-ARBA"/>
</dbReference>
<dbReference type="GO" id="GO:1990904">
    <property type="term" value="C:ribonucleoprotein complex"/>
    <property type="evidence" value="ECO:0007669"/>
    <property type="project" value="UniProtKB-KW"/>
</dbReference>
<dbReference type="GO" id="GO:0005840">
    <property type="term" value="C:ribosome"/>
    <property type="evidence" value="ECO:0007669"/>
    <property type="project" value="UniProtKB-KW"/>
</dbReference>
<dbReference type="GO" id="GO:0003735">
    <property type="term" value="F:structural constituent of ribosome"/>
    <property type="evidence" value="ECO:0007669"/>
    <property type="project" value="InterPro"/>
</dbReference>
<dbReference type="GO" id="GO:0006412">
    <property type="term" value="P:translation"/>
    <property type="evidence" value="ECO:0007669"/>
    <property type="project" value="UniProtKB-UniRule"/>
</dbReference>
<dbReference type="HAMAP" id="MF_00251">
    <property type="entry name" value="Ribosomal_bL36"/>
    <property type="match status" value="1"/>
</dbReference>
<dbReference type="InterPro" id="IPR000473">
    <property type="entry name" value="Ribosomal_bL36"/>
</dbReference>
<dbReference type="InterPro" id="IPR035977">
    <property type="entry name" value="Ribosomal_bL36_sp"/>
</dbReference>
<dbReference type="NCBIfam" id="TIGR01022">
    <property type="entry name" value="rpmJ_bact"/>
    <property type="match status" value="1"/>
</dbReference>
<dbReference type="PANTHER" id="PTHR42888">
    <property type="entry name" value="50S RIBOSOMAL PROTEIN L36, CHLOROPLASTIC"/>
    <property type="match status" value="1"/>
</dbReference>
<dbReference type="PANTHER" id="PTHR42888:SF1">
    <property type="entry name" value="LARGE RIBOSOMAL SUBUNIT PROTEIN BL36C"/>
    <property type="match status" value="1"/>
</dbReference>
<dbReference type="Pfam" id="PF00444">
    <property type="entry name" value="Ribosomal_L36"/>
    <property type="match status" value="1"/>
</dbReference>
<dbReference type="SUPFAM" id="SSF57840">
    <property type="entry name" value="Ribosomal protein L36"/>
    <property type="match status" value="1"/>
</dbReference>
<dbReference type="PROSITE" id="PS00828">
    <property type="entry name" value="RIBOSOMAL_L36"/>
    <property type="match status" value="1"/>
</dbReference>
<feature type="chain" id="PRO_1000196199" description="Large ribosomal subunit protein bL36">
    <location>
        <begin position="1"/>
        <end position="37"/>
    </location>
</feature>
<reference key="1">
    <citation type="journal article" date="2009" name="Nat. Genet.">
        <title>Comparative genomic and phylogeographic analysis of Mycobacterium leprae.</title>
        <authorList>
            <person name="Monot M."/>
            <person name="Honore N."/>
            <person name="Garnier T."/>
            <person name="Zidane N."/>
            <person name="Sherafi D."/>
            <person name="Paniz-Mondolfi A."/>
            <person name="Matsuoka M."/>
            <person name="Taylor G.M."/>
            <person name="Donoghue H.D."/>
            <person name="Bouwman A."/>
            <person name="Mays S."/>
            <person name="Watson C."/>
            <person name="Lockwood D."/>
            <person name="Khamispour A."/>
            <person name="Dowlati Y."/>
            <person name="Jianping S."/>
            <person name="Rea T.H."/>
            <person name="Vera-Cabrera L."/>
            <person name="Stefani M.M."/>
            <person name="Banu S."/>
            <person name="Macdonald M."/>
            <person name="Sapkota B.R."/>
            <person name="Spencer J.S."/>
            <person name="Thomas J."/>
            <person name="Harshman K."/>
            <person name="Singh P."/>
            <person name="Busso P."/>
            <person name="Gattiker A."/>
            <person name="Rougemont J."/>
            <person name="Brennan P.J."/>
            <person name="Cole S.T."/>
        </authorList>
    </citation>
    <scope>NUCLEOTIDE SEQUENCE [LARGE SCALE GENOMIC DNA]</scope>
    <source>
        <strain>Br4923</strain>
    </source>
</reference>
<comment type="similarity">
    <text evidence="1">Belongs to the bacterial ribosomal protein bL36 family.</text>
</comment>
<evidence type="ECO:0000255" key="1">
    <source>
        <dbReference type="HAMAP-Rule" id="MF_00251"/>
    </source>
</evidence>
<evidence type="ECO:0000305" key="2"/>